<dbReference type="EC" id="2.7.7.3" evidence="1"/>
<dbReference type="EMBL" id="AE009949">
    <property type="protein sequence ID" value="AAL98121.1"/>
    <property type="molecule type" value="Genomic_DNA"/>
</dbReference>
<dbReference type="RefSeq" id="WP_002983821.1">
    <property type="nucleotide sequence ID" value="NC_003485.1"/>
</dbReference>
<dbReference type="SMR" id="P63823"/>
<dbReference type="GeneID" id="69900575"/>
<dbReference type="KEGG" id="spm:spyM18_1554"/>
<dbReference type="HOGENOM" id="CLU_100149_0_1_9"/>
<dbReference type="UniPathway" id="UPA00241">
    <property type="reaction ID" value="UER00355"/>
</dbReference>
<dbReference type="GO" id="GO:0005737">
    <property type="term" value="C:cytoplasm"/>
    <property type="evidence" value="ECO:0007669"/>
    <property type="project" value="UniProtKB-SubCell"/>
</dbReference>
<dbReference type="GO" id="GO:0005524">
    <property type="term" value="F:ATP binding"/>
    <property type="evidence" value="ECO:0007669"/>
    <property type="project" value="UniProtKB-KW"/>
</dbReference>
<dbReference type="GO" id="GO:0004595">
    <property type="term" value="F:pantetheine-phosphate adenylyltransferase activity"/>
    <property type="evidence" value="ECO:0007669"/>
    <property type="project" value="UniProtKB-UniRule"/>
</dbReference>
<dbReference type="GO" id="GO:0015937">
    <property type="term" value="P:coenzyme A biosynthetic process"/>
    <property type="evidence" value="ECO:0007669"/>
    <property type="project" value="UniProtKB-UniRule"/>
</dbReference>
<dbReference type="CDD" id="cd02163">
    <property type="entry name" value="PPAT"/>
    <property type="match status" value="1"/>
</dbReference>
<dbReference type="Gene3D" id="3.40.50.620">
    <property type="entry name" value="HUPs"/>
    <property type="match status" value="1"/>
</dbReference>
<dbReference type="HAMAP" id="MF_00151">
    <property type="entry name" value="PPAT_bact"/>
    <property type="match status" value="1"/>
</dbReference>
<dbReference type="InterPro" id="IPR004821">
    <property type="entry name" value="Cyt_trans-like"/>
</dbReference>
<dbReference type="InterPro" id="IPR001980">
    <property type="entry name" value="PPAT"/>
</dbReference>
<dbReference type="InterPro" id="IPR014729">
    <property type="entry name" value="Rossmann-like_a/b/a_fold"/>
</dbReference>
<dbReference type="NCBIfam" id="TIGR01510">
    <property type="entry name" value="coaD_prev_kdtB"/>
    <property type="match status" value="1"/>
</dbReference>
<dbReference type="NCBIfam" id="TIGR00125">
    <property type="entry name" value="cyt_tran_rel"/>
    <property type="match status" value="1"/>
</dbReference>
<dbReference type="PANTHER" id="PTHR21342">
    <property type="entry name" value="PHOSPHOPANTETHEINE ADENYLYLTRANSFERASE"/>
    <property type="match status" value="1"/>
</dbReference>
<dbReference type="PANTHER" id="PTHR21342:SF1">
    <property type="entry name" value="PHOSPHOPANTETHEINE ADENYLYLTRANSFERASE"/>
    <property type="match status" value="1"/>
</dbReference>
<dbReference type="Pfam" id="PF01467">
    <property type="entry name" value="CTP_transf_like"/>
    <property type="match status" value="1"/>
</dbReference>
<dbReference type="PRINTS" id="PR01020">
    <property type="entry name" value="LPSBIOSNTHSS"/>
</dbReference>
<dbReference type="SUPFAM" id="SSF52374">
    <property type="entry name" value="Nucleotidylyl transferase"/>
    <property type="match status" value="1"/>
</dbReference>
<feature type="chain" id="PRO_0000156289" description="Phosphopantetheine adenylyltransferase">
    <location>
        <begin position="1"/>
        <end position="163"/>
    </location>
</feature>
<feature type="binding site" evidence="1">
    <location>
        <begin position="11"/>
        <end position="12"/>
    </location>
    <ligand>
        <name>ATP</name>
        <dbReference type="ChEBI" id="CHEBI:30616"/>
    </ligand>
</feature>
<feature type="binding site" evidence="1">
    <location>
        <position position="11"/>
    </location>
    <ligand>
        <name>substrate</name>
    </ligand>
</feature>
<feature type="binding site" evidence="1">
    <location>
        <position position="19"/>
    </location>
    <ligand>
        <name>ATP</name>
        <dbReference type="ChEBI" id="CHEBI:30616"/>
    </ligand>
</feature>
<feature type="binding site" evidence="1">
    <location>
        <position position="43"/>
    </location>
    <ligand>
        <name>substrate</name>
    </ligand>
</feature>
<feature type="binding site" evidence="1">
    <location>
        <position position="76"/>
    </location>
    <ligand>
        <name>substrate</name>
    </ligand>
</feature>
<feature type="binding site" evidence="1">
    <location>
        <position position="90"/>
    </location>
    <ligand>
        <name>substrate</name>
    </ligand>
</feature>
<feature type="binding site" evidence="1">
    <location>
        <begin position="91"/>
        <end position="93"/>
    </location>
    <ligand>
        <name>ATP</name>
        <dbReference type="ChEBI" id="CHEBI:30616"/>
    </ligand>
</feature>
<feature type="binding site" evidence="1">
    <location>
        <position position="101"/>
    </location>
    <ligand>
        <name>ATP</name>
        <dbReference type="ChEBI" id="CHEBI:30616"/>
    </ligand>
</feature>
<feature type="binding site" evidence="1">
    <location>
        <begin position="126"/>
        <end position="132"/>
    </location>
    <ligand>
        <name>ATP</name>
        <dbReference type="ChEBI" id="CHEBI:30616"/>
    </ligand>
</feature>
<feature type="site" description="Transition state stabilizer" evidence="1">
    <location>
        <position position="19"/>
    </location>
</feature>
<gene>
    <name evidence="1" type="primary">coaD</name>
    <name type="synonym">kdtB</name>
    <name type="ordered locus">spyM18_1554</name>
</gene>
<proteinExistence type="inferred from homology"/>
<accession>P63823</accession>
<accession>P58104</accession>
<protein>
    <recommendedName>
        <fullName evidence="1">Phosphopantetheine adenylyltransferase</fullName>
        <ecNumber evidence="1">2.7.7.3</ecNumber>
    </recommendedName>
    <alternativeName>
        <fullName evidence="1">Dephospho-CoA pyrophosphorylase</fullName>
    </alternativeName>
    <alternativeName>
        <fullName evidence="1">Pantetheine-phosphate adenylyltransferase</fullName>
        <shortName evidence="1">PPAT</shortName>
    </alternativeName>
</protein>
<keyword id="KW-0067">ATP-binding</keyword>
<keyword id="KW-0173">Coenzyme A biosynthesis</keyword>
<keyword id="KW-0963">Cytoplasm</keyword>
<keyword id="KW-0460">Magnesium</keyword>
<keyword id="KW-0547">Nucleotide-binding</keyword>
<keyword id="KW-0548">Nucleotidyltransferase</keyword>
<keyword id="KW-0808">Transferase</keyword>
<comment type="function">
    <text evidence="1">Reversibly transfers an adenylyl group from ATP to 4'-phosphopantetheine, yielding dephospho-CoA (dPCoA) and pyrophosphate.</text>
</comment>
<comment type="catalytic activity">
    <reaction evidence="1">
        <text>(R)-4'-phosphopantetheine + ATP + H(+) = 3'-dephospho-CoA + diphosphate</text>
        <dbReference type="Rhea" id="RHEA:19801"/>
        <dbReference type="ChEBI" id="CHEBI:15378"/>
        <dbReference type="ChEBI" id="CHEBI:30616"/>
        <dbReference type="ChEBI" id="CHEBI:33019"/>
        <dbReference type="ChEBI" id="CHEBI:57328"/>
        <dbReference type="ChEBI" id="CHEBI:61723"/>
        <dbReference type="EC" id="2.7.7.3"/>
    </reaction>
</comment>
<comment type="cofactor">
    <cofactor evidence="1">
        <name>Mg(2+)</name>
        <dbReference type="ChEBI" id="CHEBI:18420"/>
    </cofactor>
</comment>
<comment type="pathway">
    <text evidence="1">Cofactor biosynthesis; coenzyme A biosynthesis; CoA from (R)-pantothenate: step 4/5.</text>
</comment>
<comment type="subunit">
    <text evidence="1">Homohexamer.</text>
</comment>
<comment type="subcellular location">
    <subcellularLocation>
        <location evidence="1">Cytoplasm</location>
    </subcellularLocation>
</comment>
<comment type="similarity">
    <text evidence="1">Belongs to the bacterial CoaD family.</text>
</comment>
<sequence>MLTKIGLYTGSFDPVTNGHLDIVKRASGLFDQIYVGIFDNPTKKSYFKLEVRKAMLTQALADFTNVIVVTSHERLAIDVAKELRVTHLIRGLRNATDFEYEENLEYFNHLLAPNIETVYLISRNKWQALSSSRVRELIHFQSSLEGLVPQSVIAQVEKMNEKT</sequence>
<evidence type="ECO:0000255" key="1">
    <source>
        <dbReference type="HAMAP-Rule" id="MF_00151"/>
    </source>
</evidence>
<name>COAD_STRP8</name>
<reference key="1">
    <citation type="journal article" date="2002" name="Proc. Natl. Acad. Sci. U.S.A.">
        <title>Genome sequence and comparative microarray analysis of serotype M18 group A Streptococcus strains associated with acute rheumatic fever outbreaks.</title>
        <authorList>
            <person name="Smoot J.C."/>
            <person name="Barbian K.D."/>
            <person name="Van Gompel J.J."/>
            <person name="Smoot L.M."/>
            <person name="Chaussee M.S."/>
            <person name="Sylva G.L."/>
            <person name="Sturdevant D.E."/>
            <person name="Ricklefs S.M."/>
            <person name="Porcella S.F."/>
            <person name="Parkins L.D."/>
            <person name="Beres S.B."/>
            <person name="Campbell D.S."/>
            <person name="Smith T.M."/>
            <person name="Zhang Q."/>
            <person name="Kapur V."/>
            <person name="Daly J.A."/>
            <person name="Veasy L.G."/>
            <person name="Musser J.M."/>
        </authorList>
    </citation>
    <scope>NUCLEOTIDE SEQUENCE [LARGE SCALE GENOMIC DNA]</scope>
    <source>
        <strain>MGAS8232</strain>
    </source>
</reference>
<organism>
    <name type="scientific">Streptococcus pyogenes serotype M18 (strain MGAS8232)</name>
    <dbReference type="NCBI Taxonomy" id="186103"/>
    <lineage>
        <taxon>Bacteria</taxon>
        <taxon>Bacillati</taxon>
        <taxon>Bacillota</taxon>
        <taxon>Bacilli</taxon>
        <taxon>Lactobacillales</taxon>
        <taxon>Streptococcaceae</taxon>
        <taxon>Streptococcus</taxon>
    </lineage>
</organism>